<reference key="1">
    <citation type="journal article" date="2005" name="Nucleic Acids Res.">
        <title>The genome sequence of Salmonella enterica serovar Choleraesuis, a highly invasive and resistant zoonotic pathogen.</title>
        <authorList>
            <person name="Chiu C.-H."/>
            <person name="Tang P."/>
            <person name="Chu C."/>
            <person name="Hu S."/>
            <person name="Bao Q."/>
            <person name="Yu J."/>
            <person name="Chou Y.-Y."/>
            <person name="Wang H.-S."/>
            <person name="Lee Y.-S."/>
        </authorList>
    </citation>
    <scope>NUCLEOTIDE SEQUENCE [LARGE SCALE GENOMIC DNA]</scope>
    <source>
        <strain>SC-B67</strain>
    </source>
</reference>
<dbReference type="EMBL" id="AE017220">
    <property type="protein sequence ID" value="AAX65445.1"/>
    <property type="molecule type" value="Genomic_DNA"/>
</dbReference>
<dbReference type="RefSeq" id="WP_000968968.1">
    <property type="nucleotide sequence ID" value="NC_006905.1"/>
</dbReference>
<dbReference type="KEGG" id="sec:SCH_1539"/>
<dbReference type="HOGENOM" id="CLU_079909_2_0_6"/>
<dbReference type="Proteomes" id="UP000000538">
    <property type="component" value="Chromosome"/>
</dbReference>
<dbReference type="GO" id="GO:0005886">
    <property type="term" value="C:plasma membrane"/>
    <property type="evidence" value="ECO:0007669"/>
    <property type="project" value="UniProtKB-SubCell"/>
</dbReference>
<dbReference type="InterPro" id="IPR002771">
    <property type="entry name" value="Multi_antbiot-R_MarC"/>
</dbReference>
<dbReference type="NCBIfam" id="TIGR00427">
    <property type="entry name" value="NAAT family transporter"/>
    <property type="match status" value="1"/>
</dbReference>
<dbReference type="NCBIfam" id="NF008228">
    <property type="entry name" value="PRK10995.1"/>
    <property type="match status" value="1"/>
</dbReference>
<dbReference type="PANTHER" id="PTHR33508:SF2">
    <property type="entry name" value="UPF0056 INNER MEMBRANE PROTEIN MARC"/>
    <property type="match status" value="1"/>
</dbReference>
<dbReference type="PANTHER" id="PTHR33508">
    <property type="entry name" value="UPF0056 MEMBRANE PROTEIN YHCE"/>
    <property type="match status" value="1"/>
</dbReference>
<dbReference type="Pfam" id="PF01914">
    <property type="entry name" value="MarC"/>
    <property type="match status" value="1"/>
</dbReference>
<proteinExistence type="inferred from homology"/>
<evidence type="ECO:0000250" key="1"/>
<evidence type="ECO:0000255" key="2"/>
<evidence type="ECO:0000305" key="3"/>
<feature type="chain" id="PRO_0000343823" description="UPF0056 inner membrane protein MarC">
    <location>
        <begin position="1"/>
        <end position="221"/>
    </location>
</feature>
<feature type="topological domain" description="Periplasmic" evidence="2">
    <location>
        <begin position="1"/>
        <end position="7"/>
    </location>
</feature>
<feature type="transmembrane region" description="Helical" evidence="2">
    <location>
        <begin position="8"/>
        <end position="28"/>
    </location>
</feature>
<feature type="topological domain" description="Cytoplasmic" evidence="2">
    <location>
        <begin position="29"/>
        <end position="45"/>
    </location>
</feature>
<feature type="transmembrane region" description="Helical" evidence="2">
    <location>
        <begin position="46"/>
        <end position="66"/>
    </location>
</feature>
<feature type="topological domain" description="Periplasmic" evidence="2">
    <location>
        <begin position="67"/>
        <end position="68"/>
    </location>
</feature>
<feature type="transmembrane region" description="Helical" evidence="2">
    <location>
        <begin position="69"/>
        <end position="89"/>
    </location>
</feature>
<feature type="topological domain" description="Cytoplasmic" evidence="2">
    <location>
        <begin position="90"/>
        <end position="118"/>
    </location>
</feature>
<feature type="transmembrane region" description="Helical" evidence="2">
    <location>
        <begin position="119"/>
        <end position="139"/>
    </location>
</feature>
<feature type="topological domain" description="Periplasmic" evidence="2">
    <location>
        <begin position="140"/>
        <end position="154"/>
    </location>
</feature>
<feature type="transmembrane region" description="Helical" evidence="2">
    <location>
        <begin position="155"/>
        <end position="175"/>
    </location>
</feature>
<feature type="topological domain" description="Cytoplasmic" evidence="2">
    <location>
        <begin position="176"/>
        <end position="196"/>
    </location>
</feature>
<feature type="transmembrane region" description="Helical" evidence="2">
    <location>
        <begin position="197"/>
        <end position="217"/>
    </location>
</feature>
<feature type="topological domain" description="Periplasmic" evidence="2">
    <location>
        <begin position="218"/>
        <end position="221"/>
    </location>
</feature>
<sequence length="221" mass="23607">MMDLFKAIGLGLVVLLPLANPLTTVALFLGLAGNMNSAERNRQSYMASVYVFAIMMVAYYAGQLVMNTFGISIPGLRIAGGLIVAFIGFRMLFPQQKAHESPEAKSKSEELADEPTANIAFVPLAMPSTAGPGTIAMIISSASTVRHGGEFPDWVIMVAPPIIFLAVAVILWGCLRSSGAIMRLVGKGGIEAISRLMGFLLVCMGVQFIINGVLEIIKTYH</sequence>
<gene>
    <name type="primary">marC</name>
    <name type="ordered locus">SCH_1539</name>
</gene>
<accession>Q57PB6</accession>
<organism>
    <name type="scientific">Salmonella choleraesuis (strain SC-B67)</name>
    <dbReference type="NCBI Taxonomy" id="321314"/>
    <lineage>
        <taxon>Bacteria</taxon>
        <taxon>Pseudomonadati</taxon>
        <taxon>Pseudomonadota</taxon>
        <taxon>Gammaproteobacteria</taxon>
        <taxon>Enterobacterales</taxon>
        <taxon>Enterobacteriaceae</taxon>
        <taxon>Salmonella</taxon>
    </lineage>
</organism>
<comment type="subcellular location">
    <subcellularLocation>
        <location evidence="1">Cell inner membrane</location>
        <topology evidence="1">Multi-pass membrane protein</topology>
    </subcellularLocation>
</comment>
<comment type="similarity">
    <text evidence="3">Belongs to the UPF0056 (MarC) family.</text>
</comment>
<protein>
    <recommendedName>
        <fullName>UPF0056 inner membrane protein MarC</fullName>
    </recommendedName>
</protein>
<keyword id="KW-0997">Cell inner membrane</keyword>
<keyword id="KW-1003">Cell membrane</keyword>
<keyword id="KW-0472">Membrane</keyword>
<keyword id="KW-0812">Transmembrane</keyword>
<keyword id="KW-1133">Transmembrane helix</keyword>
<name>MARC_SALCH</name>